<protein>
    <recommendedName>
        <fullName evidence="1">Large ribosomal subunit protein bL31</fullName>
    </recommendedName>
    <alternativeName>
        <fullName evidence="3">50S ribosomal protein L31</fullName>
    </alternativeName>
</protein>
<organism>
    <name type="scientific">Prochlorococcus marinus (strain MIT 9303)</name>
    <dbReference type="NCBI Taxonomy" id="59922"/>
    <lineage>
        <taxon>Bacteria</taxon>
        <taxon>Bacillati</taxon>
        <taxon>Cyanobacteriota</taxon>
        <taxon>Cyanophyceae</taxon>
        <taxon>Synechococcales</taxon>
        <taxon>Prochlorococcaceae</taxon>
        <taxon>Prochlorococcus</taxon>
    </lineage>
</organism>
<name>RL31_PROM3</name>
<gene>
    <name evidence="1" type="primary">rpmE</name>
    <name evidence="1" type="synonym">rpl31</name>
    <name type="ordered locus">P9303_23311</name>
</gene>
<proteinExistence type="inferred from homology"/>
<keyword id="KW-0687">Ribonucleoprotein</keyword>
<keyword id="KW-0689">Ribosomal protein</keyword>
<keyword id="KW-0694">RNA-binding</keyword>
<keyword id="KW-0699">rRNA-binding</keyword>
<evidence type="ECO:0000255" key="1">
    <source>
        <dbReference type="HAMAP-Rule" id="MF_00501"/>
    </source>
</evidence>
<evidence type="ECO:0000256" key="2">
    <source>
        <dbReference type="SAM" id="MobiDB-lite"/>
    </source>
</evidence>
<evidence type="ECO:0000305" key="3"/>
<accession>A2CC56</accession>
<comment type="function">
    <text evidence="1">Binds the 23S rRNA.</text>
</comment>
<comment type="subunit">
    <text evidence="1">Part of the 50S ribosomal subunit.</text>
</comment>
<comment type="similarity">
    <text evidence="1">Belongs to the bacterial ribosomal protein bL31 family. Type A subfamily.</text>
</comment>
<dbReference type="EMBL" id="CP000554">
    <property type="protein sequence ID" value="ABM79066.1"/>
    <property type="molecule type" value="Genomic_DNA"/>
</dbReference>
<dbReference type="RefSeq" id="WP_011826930.1">
    <property type="nucleotide sequence ID" value="NC_008820.1"/>
</dbReference>
<dbReference type="STRING" id="59922.P9303_23311"/>
<dbReference type="KEGG" id="pmf:P9303_23311"/>
<dbReference type="HOGENOM" id="CLU_114306_1_2_3"/>
<dbReference type="BioCyc" id="PMAR59922:G1G80-2048-MONOMER"/>
<dbReference type="Proteomes" id="UP000002274">
    <property type="component" value="Chromosome"/>
</dbReference>
<dbReference type="GO" id="GO:1990904">
    <property type="term" value="C:ribonucleoprotein complex"/>
    <property type="evidence" value="ECO:0007669"/>
    <property type="project" value="UniProtKB-KW"/>
</dbReference>
<dbReference type="GO" id="GO:0005840">
    <property type="term" value="C:ribosome"/>
    <property type="evidence" value="ECO:0007669"/>
    <property type="project" value="UniProtKB-KW"/>
</dbReference>
<dbReference type="GO" id="GO:0019843">
    <property type="term" value="F:rRNA binding"/>
    <property type="evidence" value="ECO:0007669"/>
    <property type="project" value="UniProtKB-KW"/>
</dbReference>
<dbReference type="GO" id="GO:0003735">
    <property type="term" value="F:structural constituent of ribosome"/>
    <property type="evidence" value="ECO:0007669"/>
    <property type="project" value="InterPro"/>
</dbReference>
<dbReference type="GO" id="GO:0006412">
    <property type="term" value="P:translation"/>
    <property type="evidence" value="ECO:0007669"/>
    <property type="project" value="UniProtKB-UniRule"/>
</dbReference>
<dbReference type="Gene3D" id="4.10.830.30">
    <property type="entry name" value="Ribosomal protein L31"/>
    <property type="match status" value="1"/>
</dbReference>
<dbReference type="HAMAP" id="MF_00501">
    <property type="entry name" value="Ribosomal_bL31_1"/>
    <property type="match status" value="1"/>
</dbReference>
<dbReference type="InterPro" id="IPR034704">
    <property type="entry name" value="Ribosomal_bL28/bL31-like_sf"/>
</dbReference>
<dbReference type="InterPro" id="IPR002150">
    <property type="entry name" value="Ribosomal_bL31"/>
</dbReference>
<dbReference type="InterPro" id="IPR027491">
    <property type="entry name" value="Ribosomal_bL31_A"/>
</dbReference>
<dbReference type="InterPro" id="IPR042105">
    <property type="entry name" value="Ribosomal_bL31_sf"/>
</dbReference>
<dbReference type="NCBIfam" id="TIGR00105">
    <property type="entry name" value="L31"/>
    <property type="match status" value="1"/>
</dbReference>
<dbReference type="NCBIfam" id="NF001809">
    <property type="entry name" value="PRK00528.1"/>
    <property type="match status" value="1"/>
</dbReference>
<dbReference type="PANTHER" id="PTHR33280">
    <property type="entry name" value="50S RIBOSOMAL PROTEIN L31, CHLOROPLASTIC"/>
    <property type="match status" value="1"/>
</dbReference>
<dbReference type="PANTHER" id="PTHR33280:SF1">
    <property type="entry name" value="LARGE RIBOSOMAL SUBUNIT PROTEIN BL31C"/>
    <property type="match status" value="1"/>
</dbReference>
<dbReference type="Pfam" id="PF01197">
    <property type="entry name" value="Ribosomal_L31"/>
    <property type="match status" value="1"/>
</dbReference>
<dbReference type="PRINTS" id="PR01249">
    <property type="entry name" value="RIBOSOMALL31"/>
</dbReference>
<dbReference type="SUPFAM" id="SSF143800">
    <property type="entry name" value="L28p-like"/>
    <property type="match status" value="1"/>
</dbReference>
<dbReference type="PROSITE" id="PS01143">
    <property type="entry name" value="RIBOSOMAL_L31"/>
    <property type="match status" value="1"/>
</dbReference>
<sequence>MPKPDIHPNWYPDAKVICNGEVVMTTGSTQPELHVDVWSGNHPFFTGTQKILDTEGRVDRFMRKYGMGSADAAADEKKTDAKNNNKDNTSKED</sequence>
<feature type="chain" id="PRO_1000126690" description="Large ribosomal subunit protein bL31">
    <location>
        <begin position="1"/>
        <end position="93"/>
    </location>
</feature>
<feature type="region of interest" description="Disordered" evidence="2">
    <location>
        <begin position="68"/>
        <end position="93"/>
    </location>
</feature>
<feature type="compositionally biased region" description="Basic and acidic residues" evidence="2">
    <location>
        <begin position="74"/>
        <end position="93"/>
    </location>
</feature>
<reference key="1">
    <citation type="journal article" date="2007" name="PLoS Genet.">
        <title>Patterns and implications of gene gain and loss in the evolution of Prochlorococcus.</title>
        <authorList>
            <person name="Kettler G.C."/>
            <person name="Martiny A.C."/>
            <person name="Huang K."/>
            <person name="Zucker J."/>
            <person name="Coleman M.L."/>
            <person name="Rodrigue S."/>
            <person name="Chen F."/>
            <person name="Lapidus A."/>
            <person name="Ferriera S."/>
            <person name="Johnson J."/>
            <person name="Steglich C."/>
            <person name="Church G.M."/>
            <person name="Richardson P."/>
            <person name="Chisholm S.W."/>
        </authorList>
    </citation>
    <scope>NUCLEOTIDE SEQUENCE [LARGE SCALE GENOMIC DNA]</scope>
    <source>
        <strain>MIT 9303</strain>
    </source>
</reference>